<protein>
    <recommendedName>
        <fullName>GPI alpha-1,2-mannosyltransferase 3</fullName>
        <ecNumber evidence="1">2.4.1.-</ecNumber>
    </recommendedName>
    <alternativeName>
        <fullName>GPI mannosyltransferase III</fullName>
        <shortName>GPI-MT-III</shortName>
    </alternativeName>
    <alternativeName>
        <fullName evidence="1">Phosphatidylinositol-glycan biosynthesis class B protein</fullName>
        <shortName evidence="1">PIG-B</shortName>
    </alternativeName>
</protein>
<proteinExistence type="evidence at transcript level"/>
<evidence type="ECO:0000250" key="1">
    <source>
        <dbReference type="UniProtKB" id="Q92521"/>
    </source>
</evidence>
<evidence type="ECO:0000255" key="2"/>
<evidence type="ECO:0000305" key="3"/>
<keyword id="KW-0256">Endoplasmic reticulum</keyword>
<keyword id="KW-0325">Glycoprotein</keyword>
<keyword id="KW-0328">Glycosyltransferase</keyword>
<keyword id="KW-0337">GPI-anchor biosynthesis</keyword>
<keyword id="KW-0472">Membrane</keyword>
<keyword id="KW-1185">Reference proteome</keyword>
<keyword id="KW-0808">Transferase</keyword>
<keyword id="KW-0812">Transmembrane</keyword>
<keyword id="KW-1133">Transmembrane helix</keyword>
<name>PIGB_XENLA</name>
<organism>
    <name type="scientific">Xenopus laevis</name>
    <name type="common">African clawed frog</name>
    <dbReference type="NCBI Taxonomy" id="8355"/>
    <lineage>
        <taxon>Eukaryota</taxon>
        <taxon>Metazoa</taxon>
        <taxon>Chordata</taxon>
        <taxon>Craniata</taxon>
        <taxon>Vertebrata</taxon>
        <taxon>Euteleostomi</taxon>
        <taxon>Amphibia</taxon>
        <taxon>Batrachia</taxon>
        <taxon>Anura</taxon>
        <taxon>Pipoidea</taxon>
        <taxon>Pipidae</taxon>
        <taxon>Xenopodinae</taxon>
        <taxon>Xenopus</taxon>
        <taxon>Xenopus</taxon>
    </lineage>
</organism>
<accession>Q4V7R2</accession>
<gene>
    <name evidence="1" type="primary">pigb</name>
</gene>
<sequence length="531" mass="61447">MEKVRSRVGWLYRRQDSQGAVQLRKRKSRLYSKEASSACPGAGLFGENTYLVLAAVGFRIFNCMMVQTSFVPDEYWQSLEVAHNMTFNYGYLTWEWTEGLRGFSYPLMFAAIYKVLYLLGKDHVWFLIWIPRLAQAVLSGIADVRLYSLVRHLENTELAKWVYFCQLCSWFTWYCATRTLTNTMEAVLSTFALYYYPLEGSSTNSSTKYLICVALAFLIRPTAVILWIPLLFYHFAKEKKKAELVVQQYLPIGILTLAASLTVDRIFFGKWTFVQWNFLKFNVLQDLGSFYGSHPWHWYITQGVPVILCTHLPFFIHGCMVTPKRYQILLVAVAWTVLTYSALSHKEFRFIYPVLPVCMVFCGFSFSNLKRWKKAAVGFLVLSNLFPALYTGLIHQRGALDIMSGIQKLCKMENSSASLFVLMPCHSIPFYSHVHCPIKMNFLECPPDLSDSDAYIDEADLFYVSPLAWLNAEFYNKTLLPTHLIMFSVLEPEIRSFLTNNNYLKSMSVFHTHLPEGRTGSHIYMYERNSK</sequence>
<comment type="function">
    <text evidence="1">Alpha-1,2-mannosyltransferase that catalyzes the transfer of the third mannose, via an alpha-1,2 bond, from a dolichol-phosphate-mannose (Dol-P-Man) to an alpha-D-Man-(1-&gt;6)-2-PEtn-alpha-D-Man-(1-&gt;4)-alpha-D-GlcN-(1-&gt;6)-(1-radyl,2-acyl-sn-glycero-3-phospho)-2-acyl-inositol intermediate to generate an alpha-D-Man-(1-&gt;2)-alpha-D-Man-(1-&gt;6)-2-PEtn-alpha-D-Man-(1-&gt;4)-alpha-D-GlcN-(1-&gt;6)-(1-radyl,2-acyl-sn-glycero-3-phospho)-2-acyl-inositol (also termed H6) and participates in the nineth step of the glycosylphosphatidylinositol-anchor biosynthesis (By similarity). May also add the third mannose to an alpha-D-Man-(1-&gt;6)-alpha-D-Man-(1-&gt;4)-alpha-D-GlcN-(1-&gt;6)-(1-radyl,2-acyl-sn-glycero-3-phospho)-2-acyl-inositol (also termed H3) intermediate generating an alpha-D-Man-(1-&gt;2)-alpha-D-Man-(1-&gt;6)-alpha-D-Man-(1-&gt;4)-alpha-D-GlcN-(1-&gt;6)-(1-radyl,2-acyl-sn-glycero-3-phospho)-2-acyl-inositol (also termed H4) (By similarity).</text>
</comment>
<comment type="pathway">
    <text evidence="1">Glycolipid biosynthesis; glycosylphosphatidylinositol-anchor biosynthesis.</text>
</comment>
<comment type="subcellular location">
    <subcellularLocation>
        <location evidence="1">Endoplasmic reticulum membrane</location>
        <topology evidence="2">Multi-pass membrane protein</topology>
    </subcellularLocation>
</comment>
<comment type="similarity">
    <text evidence="3">Belongs to the glycosyltransferase 22 family. PIGB subfamily.</text>
</comment>
<feature type="chain" id="PRO_0000246254" description="GPI alpha-1,2-mannosyltransferase 3">
    <location>
        <begin position="1"/>
        <end position="531"/>
    </location>
</feature>
<feature type="transmembrane region" description="Helical" evidence="2">
    <location>
        <begin position="99"/>
        <end position="119"/>
    </location>
</feature>
<feature type="transmembrane region" description="Helical" evidence="2">
    <location>
        <begin position="124"/>
        <end position="144"/>
    </location>
</feature>
<feature type="transmembrane region" description="Helical" evidence="2">
    <location>
        <begin position="174"/>
        <end position="196"/>
    </location>
</feature>
<feature type="transmembrane region" description="Helical" evidence="2">
    <location>
        <begin position="210"/>
        <end position="230"/>
    </location>
</feature>
<feature type="transmembrane region" description="Helical" evidence="2">
    <location>
        <begin position="249"/>
        <end position="269"/>
    </location>
</feature>
<feature type="transmembrane region" description="Helical" evidence="2">
    <location>
        <begin position="303"/>
        <end position="323"/>
    </location>
</feature>
<feature type="transmembrane region" description="Helical" evidence="2">
    <location>
        <begin position="328"/>
        <end position="348"/>
    </location>
</feature>
<feature type="transmembrane region" description="Helical" evidence="2">
    <location>
        <begin position="350"/>
        <end position="370"/>
    </location>
</feature>
<feature type="transmembrane region" description="Helical" evidence="2">
    <location>
        <begin position="375"/>
        <end position="395"/>
    </location>
</feature>
<feature type="glycosylation site" description="N-linked (GlcNAc...) asparagine" evidence="2">
    <location>
        <position position="84"/>
    </location>
</feature>
<feature type="glycosylation site" description="N-linked (GlcNAc...) asparagine" evidence="2">
    <location>
        <position position="204"/>
    </location>
</feature>
<feature type="glycosylation site" description="N-linked (GlcNAc...) asparagine" evidence="2">
    <location>
        <position position="414"/>
    </location>
</feature>
<feature type="glycosylation site" description="N-linked (GlcNAc...) asparagine" evidence="2">
    <location>
        <position position="476"/>
    </location>
</feature>
<dbReference type="EC" id="2.4.1.-" evidence="1"/>
<dbReference type="EMBL" id="BC097762">
    <property type="protein sequence ID" value="AAH97762.1"/>
    <property type="molecule type" value="mRNA"/>
</dbReference>
<dbReference type="RefSeq" id="NP_001089512.1">
    <property type="nucleotide sequence ID" value="NM_001096043.1"/>
</dbReference>
<dbReference type="CAZy" id="GT22">
    <property type="family name" value="Glycosyltransferase Family 22"/>
</dbReference>
<dbReference type="GlyCosmos" id="Q4V7R2">
    <property type="glycosylation" value="4 sites, No reported glycans"/>
</dbReference>
<dbReference type="DNASU" id="734564"/>
<dbReference type="GeneID" id="734564"/>
<dbReference type="KEGG" id="xla:734564"/>
<dbReference type="AGR" id="Xenbase:XB-GENE-996683"/>
<dbReference type="CTD" id="734564"/>
<dbReference type="Xenbase" id="XB-GENE-996683">
    <property type="gene designation" value="pigb.S"/>
</dbReference>
<dbReference type="OrthoDB" id="416834at2759"/>
<dbReference type="UniPathway" id="UPA00196"/>
<dbReference type="Proteomes" id="UP000186698">
    <property type="component" value="Chromosome 3S"/>
</dbReference>
<dbReference type="Bgee" id="734564">
    <property type="expression patterns" value="Expressed in egg cell and 19 other cell types or tissues"/>
</dbReference>
<dbReference type="GO" id="GO:0005789">
    <property type="term" value="C:endoplasmic reticulum membrane"/>
    <property type="evidence" value="ECO:0000318"/>
    <property type="project" value="GO_Central"/>
</dbReference>
<dbReference type="GO" id="GO:0000026">
    <property type="term" value="F:alpha-1,2-mannosyltransferase activity"/>
    <property type="evidence" value="ECO:0000318"/>
    <property type="project" value="GO_Central"/>
</dbReference>
<dbReference type="GO" id="GO:0006506">
    <property type="term" value="P:GPI anchor biosynthetic process"/>
    <property type="evidence" value="ECO:0000318"/>
    <property type="project" value="GO_Central"/>
</dbReference>
<dbReference type="InterPro" id="IPR005599">
    <property type="entry name" value="GPI_mannosylTrfase"/>
</dbReference>
<dbReference type="PANTHER" id="PTHR22760">
    <property type="entry name" value="GLYCOSYLTRANSFERASE"/>
    <property type="match status" value="1"/>
</dbReference>
<dbReference type="PANTHER" id="PTHR22760:SF4">
    <property type="entry name" value="GPI MANNOSYLTRANSFERASE 3"/>
    <property type="match status" value="1"/>
</dbReference>
<dbReference type="Pfam" id="PF03901">
    <property type="entry name" value="Glyco_transf_22"/>
    <property type="match status" value="1"/>
</dbReference>
<reference key="1">
    <citation type="submission" date="2005-06" db="EMBL/GenBank/DDBJ databases">
        <authorList>
            <consortium name="NIH - Xenopus Gene Collection (XGC) project"/>
        </authorList>
    </citation>
    <scope>NUCLEOTIDE SEQUENCE [LARGE SCALE MRNA]</scope>
    <source>
        <tissue>Egg</tissue>
    </source>
</reference>